<comment type="function">
    <text evidence="3">Responsible for physiological and behavioral changes in mated female flies.</text>
</comment>
<comment type="subcellular location">
    <subcellularLocation>
        <location evidence="4">Secreted</location>
    </subcellularLocation>
</comment>
<comment type="tissue specificity">
    <text evidence="3">Seminal fluid.</text>
</comment>
<comment type="sequence caution" evidence="4">
    <conflict type="erroneous gene model prediction">
        <sequence resource="EMBL-CDS" id="AAB96388"/>
    </conflict>
</comment>
<comment type="sequence caution" evidence="4">
    <conflict type="erroneous gene model prediction">
        <sequence resource="EMBL-CDS" id="AAB96389"/>
    </conflict>
</comment>
<comment type="sequence caution" evidence="4">
    <conflict type="frameshift">
        <sequence resource="EMBL-CDS" id="AAB96395"/>
    </conflict>
</comment>
<protein>
    <recommendedName>
        <fullName>Accessory gland protein Acp32CD</fullName>
    </recommendedName>
</protein>
<organism>
    <name type="scientific">Drosophila melanogaster</name>
    <name type="common">Fruit fly</name>
    <dbReference type="NCBI Taxonomy" id="7227"/>
    <lineage>
        <taxon>Eukaryota</taxon>
        <taxon>Metazoa</taxon>
        <taxon>Ecdysozoa</taxon>
        <taxon>Arthropoda</taxon>
        <taxon>Hexapoda</taxon>
        <taxon>Insecta</taxon>
        <taxon>Pterygota</taxon>
        <taxon>Neoptera</taxon>
        <taxon>Endopterygota</taxon>
        <taxon>Diptera</taxon>
        <taxon>Brachycera</taxon>
        <taxon>Muscomorpha</taxon>
        <taxon>Ephydroidea</taxon>
        <taxon>Drosophilidae</taxon>
        <taxon>Drosophila</taxon>
        <taxon>Sophophora</taxon>
    </lineage>
</organism>
<accession>O46203</accession>
<accession>O46225</accession>
<accession>Q8T4D3</accession>
<accession>Q9TY45</accession>
<accession>Q9VKL2</accession>
<accession>X2J5M2</accession>
<gene>
    <name type="primary">Acp32CD</name>
    <name type="ORF">CG4605</name>
</gene>
<dbReference type="EMBL" id="AE014134">
    <property type="protein sequence ID" value="AAF53055.2"/>
    <property type="molecule type" value="Genomic_DNA"/>
</dbReference>
<dbReference type="EMBL" id="AE014134">
    <property type="protein sequence ID" value="AHN54343.1"/>
    <property type="molecule type" value="Genomic_DNA"/>
</dbReference>
<dbReference type="EMBL" id="AY089245">
    <property type="protein sequence ID" value="AAL89983.1"/>
    <property type="molecule type" value="mRNA"/>
</dbReference>
<dbReference type="EMBL" id="U85764">
    <property type="protein sequence ID" value="AAB96388.1"/>
    <property type="status" value="ALT_SEQ"/>
    <property type="molecule type" value="Genomic_DNA"/>
</dbReference>
<dbReference type="EMBL" id="U85764">
    <property type="protein sequence ID" value="AAB96389.1"/>
    <property type="status" value="ALT_SEQ"/>
    <property type="molecule type" value="Genomic_DNA"/>
</dbReference>
<dbReference type="EMBL" id="U90948">
    <property type="protein sequence ID" value="AAB96395.1"/>
    <property type="status" value="ALT_FRAME"/>
    <property type="molecule type" value="mRNA"/>
</dbReference>
<dbReference type="RefSeq" id="NP_001285829.1">
    <property type="nucleotide sequence ID" value="NM_001298900.1"/>
</dbReference>
<dbReference type="RefSeq" id="NP_477328.2">
    <property type="nucleotide sequence ID" value="NM_057980.5"/>
</dbReference>
<dbReference type="BioGRID" id="60595">
    <property type="interactions" value="1"/>
</dbReference>
<dbReference type="FunCoup" id="O46203">
    <property type="interactions" value="42"/>
</dbReference>
<dbReference type="IntAct" id="O46203">
    <property type="interactions" value="2"/>
</dbReference>
<dbReference type="STRING" id="7227.FBpp0079747"/>
<dbReference type="GlyGen" id="O46203">
    <property type="glycosylation" value="1 site"/>
</dbReference>
<dbReference type="PaxDb" id="7227-FBpp0079747"/>
<dbReference type="DNASU" id="34531"/>
<dbReference type="EnsemblMetazoa" id="FBtr0080158">
    <property type="protein sequence ID" value="FBpp0079747"/>
    <property type="gene ID" value="FBgn0023415"/>
</dbReference>
<dbReference type="EnsemblMetazoa" id="FBtr0344020">
    <property type="protein sequence ID" value="FBpp0310471"/>
    <property type="gene ID" value="FBgn0023415"/>
</dbReference>
<dbReference type="GeneID" id="34531"/>
<dbReference type="KEGG" id="dme:Dmel_CG4605"/>
<dbReference type="AGR" id="FB:FBgn0023415"/>
<dbReference type="CTD" id="34531"/>
<dbReference type="FlyBase" id="FBgn0023415">
    <property type="gene designation" value="Acp32CD"/>
</dbReference>
<dbReference type="VEuPathDB" id="VectorBase:FBgn0023415"/>
<dbReference type="eggNOG" id="ENOG502RVRM">
    <property type="taxonomic scope" value="Eukaryota"/>
</dbReference>
<dbReference type="InParanoid" id="O46203"/>
<dbReference type="OMA" id="GHLPEHG"/>
<dbReference type="OrthoDB" id="7873186at2759"/>
<dbReference type="BioGRID-ORCS" id="34531">
    <property type="hits" value="0 hits in 1 CRISPR screen"/>
</dbReference>
<dbReference type="GenomeRNAi" id="34531"/>
<dbReference type="PRO" id="PR:O46203"/>
<dbReference type="Proteomes" id="UP000000803">
    <property type="component" value="Chromosome 2L"/>
</dbReference>
<dbReference type="Bgee" id="FBgn0023415">
    <property type="expression patterns" value="Expressed in male accessory gland secondary cell (Drosophila) in male reproductive gland and 29 other cell types or tissues"/>
</dbReference>
<dbReference type="ExpressionAtlas" id="O46203">
    <property type="expression patterns" value="baseline and differential"/>
</dbReference>
<dbReference type="GO" id="GO:0005576">
    <property type="term" value="C:extracellular region"/>
    <property type="evidence" value="ECO:0000255"/>
    <property type="project" value="FlyBase"/>
</dbReference>
<dbReference type="GO" id="GO:0005615">
    <property type="term" value="C:extracellular space"/>
    <property type="evidence" value="ECO:0000255"/>
    <property type="project" value="FlyBase"/>
</dbReference>
<dbReference type="GO" id="GO:0005179">
    <property type="term" value="F:hormone activity"/>
    <property type="evidence" value="ECO:0000303"/>
    <property type="project" value="UniProtKB"/>
</dbReference>
<dbReference type="GO" id="GO:0045434">
    <property type="term" value="P:negative regulation of female receptivity, post-mating"/>
    <property type="evidence" value="ECO:0000303"/>
    <property type="project" value="UniProtKB"/>
</dbReference>
<dbReference type="GO" id="GO:0019953">
    <property type="term" value="P:sexual reproduction"/>
    <property type="evidence" value="ECO:0000270"/>
    <property type="project" value="FlyBase"/>
</dbReference>
<sequence>MWRMRMRLLTGYLVLLALGQLPEHGALGQKYYMNFAFNNNNPDGEGGTGVDGGGGGAGGGAAGPGGGTGDSPHSQEGDGSAATDNPNDDHATSADNSLATDGDAIGKKESGGGSDGKSDSKDSSGGNDATPANGHDDDNDDSDSKDAKDRQDKEEEAGQEGKRTDHSHHSSYEISIDDSFGGRYVRSIYESSESHGHSGSNAGSNQRDNGARESSQENQDAKEVASEAPAQRAGNVPDGPETGAKEDDYEEM</sequence>
<proteinExistence type="evidence at transcript level"/>
<name>A32CD_DROME</name>
<feature type="signal peptide" evidence="1">
    <location>
        <begin position="1"/>
        <end position="19"/>
    </location>
</feature>
<feature type="chain" id="PRO_0000443083" description="Accessory gland protein Acp32CD" evidence="1">
    <location>
        <begin position="20"/>
        <end position="252"/>
    </location>
</feature>
<feature type="region of interest" description="Disordered" evidence="2">
    <location>
        <begin position="42"/>
        <end position="252"/>
    </location>
</feature>
<feature type="compositionally biased region" description="Gly residues" evidence="2">
    <location>
        <begin position="44"/>
        <end position="69"/>
    </location>
</feature>
<feature type="compositionally biased region" description="Basic and acidic residues" evidence="2">
    <location>
        <begin position="104"/>
        <end position="122"/>
    </location>
</feature>
<feature type="compositionally biased region" description="Basic and acidic residues" evidence="2">
    <location>
        <begin position="142"/>
        <end position="153"/>
    </location>
</feature>
<feature type="compositionally biased region" description="Basic and acidic residues" evidence="2">
    <location>
        <begin position="159"/>
        <end position="171"/>
    </location>
</feature>
<feature type="compositionally biased region" description="Basic and acidic residues" evidence="2">
    <location>
        <begin position="209"/>
        <end position="225"/>
    </location>
</feature>
<feature type="sequence conflict" description="In Ref. 3; AAL89983." evidence="4" ref="3">
    <original>N</original>
    <variation>T</variation>
    <location>
        <position position="218"/>
    </location>
</feature>
<reference evidence="4" key="1">
    <citation type="journal article" date="2000" name="Science">
        <title>The genome sequence of Drosophila melanogaster.</title>
        <authorList>
            <person name="Adams M.D."/>
            <person name="Celniker S.E."/>
            <person name="Holt R.A."/>
            <person name="Evans C.A."/>
            <person name="Gocayne J.D."/>
            <person name="Amanatides P.G."/>
            <person name="Scherer S.E."/>
            <person name="Li P.W."/>
            <person name="Hoskins R.A."/>
            <person name="Galle R.F."/>
            <person name="George R.A."/>
            <person name="Lewis S.E."/>
            <person name="Richards S."/>
            <person name="Ashburner M."/>
            <person name="Henderson S.N."/>
            <person name="Sutton G.G."/>
            <person name="Wortman J.R."/>
            <person name="Yandell M.D."/>
            <person name="Zhang Q."/>
            <person name="Chen L.X."/>
            <person name="Brandon R.C."/>
            <person name="Rogers Y.-H.C."/>
            <person name="Blazej R.G."/>
            <person name="Champe M."/>
            <person name="Pfeiffer B.D."/>
            <person name="Wan K.H."/>
            <person name="Doyle C."/>
            <person name="Baxter E.G."/>
            <person name="Helt G."/>
            <person name="Nelson C.R."/>
            <person name="Miklos G.L.G."/>
            <person name="Abril J.F."/>
            <person name="Agbayani A."/>
            <person name="An H.-J."/>
            <person name="Andrews-Pfannkoch C."/>
            <person name="Baldwin D."/>
            <person name="Ballew R.M."/>
            <person name="Basu A."/>
            <person name="Baxendale J."/>
            <person name="Bayraktaroglu L."/>
            <person name="Beasley E.M."/>
            <person name="Beeson K.Y."/>
            <person name="Benos P.V."/>
            <person name="Berman B.P."/>
            <person name="Bhandari D."/>
            <person name="Bolshakov S."/>
            <person name="Borkova D."/>
            <person name="Botchan M.R."/>
            <person name="Bouck J."/>
            <person name="Brokstein P."/>
            <person name="Brottier P."/>
            <person name="Burtis K.C."/>
            <person name="Busam D.A."/>
            <person name="Butler H."/>
            <person name="Cadieu E."/>
            <person name="Center A."/>
            <person name="Chandra I."/>
            <person name="Cherry J.M."/>
            <person name="Cawley S."/>
            <person name="Dahlke C."/>
            <person name="Davenport L.B."/>
            <person name="Davies P."/>
            <person name="de Pablos B."/>
            <person name="Delcher A."/>
            <person name="Deng Z."/>
            <person name="Mays A.D."/>
            <person name="Dew I."/>
            <person name="Dietz S.M."/>
            <person name="Dodson K."/>
            <person name="Doup L.E."/>
            <person name="Downes M."/>
            <person name="Dugan-Rocha S."/>
            <person name="Dunkov B.C."/>
            <person name="Dunn P."/>
            <person name="Durbin K.J."/>
            <person name="Evangelista C.C."/>
            <person name="Ferraz C."/>
            <person name="Ferriera S."/>
            <person name="Fleischmann W."/>
            <person name="Fosler C."/>
            <person name="Gabrielian A.E."/>
            <person name="Garg N.S."/>
            <person name="Gelbart W.M."/>
            <person name="Glasser K."/>
            <person name="Glodek A."/>
            <person name="Gong F."/>
            <person name="Gorrell J.H."/>
            <person name="Gu Z."/>
            <person name="Guan P."/>
            <person name="Harris M."/>
            <person name="Harris N.L."/>
            <person name="Harvey D.A."/>
            <person name="Heiman T.J."/>
            <person name="Hernandez J.R."/>
            <person name="Houck J."/>
            <person name="Hostin D."/>
            <person name="Houston K.A."/>
            <person name="Howland T.J."/>
            <person name="Wei M.-H."/>
            <person name="Ibegwam C."/>
            <person name="Jalali M."/>
            <person name="Kalush F."/>
            <person name="Karpen G.H."/>
            <person name="Ke Z."/>
            <person name="Kennison J.A."/>
            <person name="Ketchum K.A."/>
            <person name="Kimmel B.E."/>
            <person name="Kodira C.D."/>
            <person name="Kraft C.L."/>
            <person name="Kravitz S."/>
            <person name="Kulp D."/>
            <person name="Lai Z."/>
            <person name="Lasko P."/>
            <person name="Lei Y."/>
            <person name="Levitsky A.A."/>
            <person name="Li J.H."/>
            <person name="Li Z."/>
            <person name="Liang Y."/>
            <person name="Lin X."/>
            <person name="Liu X."/>
            <person name="Mattei B."/>
            <person name="McIntosh T.C."/>
            <person name="McLeod M.P."/>
            <person name="McPherson D."/>
            <person name="Merkulov G."/>
            <person name="Milshina N.V."/>
            <person name="Mobarry C."/>
            <person name="Morris J."/>
            <person name="Moshrefi A."/>
            <person name="Mount S.M."/>
            <person name="Moy M."/>
            <person name="Murphy B."/>
            <person name="Murphy L."/>
            <person name="Muzny D.M."/>
            <person name="Nelson D.L."/>
            <person name="Nelson D.R."/>
            <person name="Nelson K.A."/>
            <person name="Nixon K."/>
            <person name="Nusskern D.R."/>
            <person name="Pacleb J.M."/>
            <person name="Palazzolo M."/>
            <person name="Pittman G.S."/>
            <person name="Pan S."/>
            <person name="Pollard J."/>
            <person name="Puri V."/>
            <person name="Reese M.G."/>
            <person name="Reinert K."/>
            <person name="Remington K."/>
            <person name="Saunders R.D.C."/>
            <person name="Scheeler F."/>
            <person name="Shen H."/>
            <person name="Shue B.C."/>
            <person name="Siden-Kiamos I."/>
            <person name="Simpson M."/>
            <person name="Skupski M.P."/>
            <person name="Smith T.J."/>
            <person name="Spier E."/>
            <person name="Spradling A.C."/>
            <person name="Stapleton M."/>
            <person name="Strong R."/>
            <person name="Sun E."/>
            <person name="Svirskas R."/>
            <person name="Tector C."/>
            <person name="Turner R."/>
            <person name="Venter E."/>
            <person name="Wang A.H."/>
            <person name="Wang X."/>
            <person name="Wang Z.-Y."/>
            <person name="Wassarman D.A."/>
            <person name="Weinstock G.M."/>
            <person name="Weissenbach J."/>
            <person name="Williams S.M."/>
            <person name="Woodage T."/>
            <person name="Worley K.C."/>
            <person name="Wu D."/>
            <person name="Yang S."/>
            <person name="Yao Q.A."/>
            <person name="Ye J."/>
            <person name="Yeh R.-F."/>
            <person name="Zaveri J.S."/>
            <person name="Zhan M."/>
            <person name="Zhang G."/>
            <person name="Zhao Q."/>
            <person name="Zheng L."/>
            <person name="Zheng X.H."/>
            <person name="Zhong F.N."/>
            <person name="Zhong W."/>
            <person name="Zhou X."/>
            <person name="Zhu S.C."/>
            <person name="Zhu X."/>
            <person name="Smith H.O."/>
            <person name="Gibbs R.A."/>
            <person name="Myers E.W."/>
            <person name="Rubin G.M."/>
            <person name="Venter J.C."/>
        </authorList>
    </citation>
    <scope>NUCLEOTIDE SEQUENCE [LARGE SCALE GENOMIC DNA]</scope>
    <source>
        <strain>Berkeley</strain>
    </source>
</reference>
<reference key="2">
    <citation type="journal article" date="2002" name="Genome Biol.">
        <title>Annotation of the Drosophila melanogaster euchromatic genome: a systematic review.</title>
        <authorList>
            <person name="Misra S."/>
            <person name="Crosby M.A."/>
            <person name="Mungall C.J."/>
            <person name="Matthews B.B."/>
            <person name="Campbell K.S."/>
            <person name="Hradecky P."/>
            <person name="Huang Y."/>
            <person name="Kaminker J.S."/>
            <person name="Millburn G.H."/>
            <person name="Prochnik S.E."/>
            <person name="Smith C.D."/>
            <person name="Tupy J.L."/>
            <person name="Whitfield E.J."/>
            <person name="Bayraktaroglu L."/>
            <person name="Berman B.P."/>
            <person name="Bettencourt B.R."/>
            <person name="Celniker S.E."/>
            <person name="de Grey A.D.N.J."/>
            <person name="Drysdale R.A."/>
            <person name="Harris N.L."/>
            <person name="Richter J."/>
            <person name="Russo S."/>
            <person name="Schroeder A.J."/>
            <person name="Shu S.Q."/>
            <person name="Stapleton M."/>
            <person name="Yamada C."/>
            <person name="Ashburner M."/>
            <person name="Gelbart W.M."/>
            <person name="Rubin G.M."/>
            <person name="Lewis S.E."/>
        </authorList>
    </citation>
    <scope>GENOME REANNOTATION</scope>
    <source>
        <strain>Berkeley</strain>
    </source>
</reference>
<reference key="3">
    <citation type="journal article" date="2002" name="Genome Biol.">
        <title>A Drosophila full-length cDNA resource.</title>
        <authorList>
            <person name="Stapleton M."/>
            <person name="Carlson J.W."/>
            <person name="Brokstein P."/>
            <person name="Yu C."/>
            <person name="Champe M."/>
            <person name="George R.A."/>
            <person name="Guarin H."/>
            <person name="Kronmiller B."/>
            <person name="Pacleb J.M."/>
            <person name="Park S."/>
            <person name="Wan K.H."/>
            <person name="Rubin G.M."/>
            <person name="Celniker S.E."/>
        </authorList>
    </citation>
    <scope>NUCLEOTIDE SEQUENCE [LARGE SCALE MRNA]</scope>
    <source>
        <strain>Berkeley</strain>
        <tissue>Testis</tissue>
    </source>
</reference>
<reference evidence="4" key="4">
    <citation type="journal article" date="1997" name="Insect Biochem. Mol. Biol.">
        <title>New genes for male accessory gland proteins in Drosophila melanogaster.</title>
        <authorList>
            <person name="Wolfner M.F."/>
            <person name="Harada H.A."/>
            <person name="Bertram M.J."/>
            <person name="Stelick T.J."/>
            <person name="Kraus K.W."/>
            <person name="Kalb J.M."/>
            <person name="Lung Y.O."/>
            <person name="Neubaum D.M."/>
            <person name="Park M."/>
            <person name="Tram U.K."/>
        </authorList>
    </citation>
    <scope>NUCLEOTIDE SEQUENCE [MRNA] OF 32-252</scope>
    <scope>NUCLEOTIDE SEQUENCE [GENOMIC DNA] OF 1-45</scope>
    <scope>FUNCTION</scope>
    <scope>TISSUE SPECIFICITY</scope>
    <source>
        <strain>Canton-S</strain>
        <tissue>Male accessory gland</tissue>
    </source>
</reference>
<evidence type="ECO:0000255" key="1"/>
<evidence type="ECO:0000256" key="2">
    <source>
        <dbReference type="SAM" id="MobiDB-lite"/>
    </source>
</evidence>
<evidence type="ECO:0000269" key="3">
    <source>
    </source>
</evidence>
<evidence type="ECO:0000305" key="4"/>
<keyword id="KW-0085">Behavior</keyword>
<keyword id="KW-1185">Reference proteome</keyword>
<keyword id="KW-0964">Secreted</keyword>
<keyword id="KW-0732">Signal</keyword>